<evidence type="ECO:0000255" key="1">
    <source>
        <dbReference type="HAMAP-Rule" id="MF_00297"/>
    </source>
</evidence>
<evidence type="ECO:0000305" key="2"/>
<reference key="1">
    <citation type="journal article" date="2001" name="Proc. Natl. Acad. Sci. U.S.A.">
        <title>Complete genomic sequence of Pasteurella multocida Pm70.</title>
        <authorList>
            <person name="May B.J."/>
            <person name="Zhang Q."/>
            <person name="Li L.L."/>
            <person name="Paustian M.L."/>
            <person name="Whittam T.S."/>
            <person name="Kapur V."/>
        </authorList>
    </citation>
    <scope>NUCLEOTIDE SEQUENCE [LARGE SCALE GENOMIC DNA]</scope>
    <source>
        <strain>Pm70</strain>
    </source>
</reference>
<dbReference type="EC" id="3.6.1.-" evidence="1"/>
<dbReference type="EC" id="3.6.1.22" evidence="1"/>
<dbReference type="EMBL" id="AE004439">
    <property type="protein sequence ID" value="AAK03819.1"/>
    <property type="molecule type" value="Genomic_DNA"/>
</dbReference>
<dbReference type="RefSeq" id="WP_005724685.1">
    <property type="nucleotide sequence ID" value="NC_002663.1"/>
</dbReference>
<dbReference type="SMR" id="P57965"/>
<dbReference type="STRING" id="272843.PM1735"/>
<dbReference type="EnsemblBacteria" id="AAK03819">
    <property type="protein sequence ID" value="AAK03819"/>
    <property type="gene ID" value="PM1735"/>
</dbReference>
<dbReference type="KEGG" id="pmu:PM1735"/>
<dbReference type="PATRIC" id="fig|272843.6.peg.1757"/>
<dbReference type="HOGENOM" id="CLU_037162_0_1_6"/>
<dbReference type="OrthoDB" id="9791656at2"/>
<dbReference type="Proteomes" id="UP000000809">
    <property type="component" value="Chromosome"/>
</dbReference>
<dbReference type="GO" id="GO:0005829">
    <property type="term" value="C:cytosol"/>
    <property type="evidence" value="ECO:0007669"/>
    <property type="project" value="TreeGrafter"/>
</dbReference>
<dbReference type="GO" id="GO:0000287">
    <property type="term" value="F:magnesium ion binding"/>
    <property type="evidence" value="ECO:0007669"/>
    <property type="project" value="UniProtKB-UniRule"/>
</dbReference>
<dbReference type="GO" id="GO:0030145">
    <property type="term" value="F:manganese ion binding"/>
    <property type="evidence" value="ECO:0007669"/>
    <property type="project" value="UniProtKB-UniRule"/>
</dbReference>
<dbReference type="GO" id="GO:0000210">
    <property type="term" value="F:NAD+ diphosphatase activity"/>
    <property type="evidence" value="ECO:0007669"/>
    <property type="project" value="UniProtKB-UniRule"/>
</dbReference>
<dbReference type="GO" id="GO:0035529">
    <property type="term" value="F:NADH pyrophosphatase activity"/>
    <property type="evidence" value="ECO:0007669"/>
    <property type="project" value="TreeGrafter"/>
</dbReference>
<dbReference type="GO" id="GO:0110153">
    <property type="term" value="F:RNA NAD-cap (NMN-forming) hydrolase activity"/>
    <property type="evidence" value="ECO:0007669"/>
    <property type="project" value="RHEA"/>
</dbReference>
<dbReference type="GO" id="GO:0008270">
    <property type="term" value="F:zinc ion binding"/>
    <property type="evidence" value="ECO:0007669"/>
    <property type="project" value="UniProtKB-UniRule"/>
</dbReference>
<dbReference type="GO" id="GO:0019677">
    <property type="term" value="P:NAD catabolic process"/>
    <property type="evidence" value="ECO:0007669"/>
    <property type="project" value="TreeGrafter"/>
</dbReference>
<dbReference type="GO" id="GO:0006734">
    <property type="term" value="P:NADH metabolic process"/>
    <property type="evidence" value="ECO:0007669"/>
    <property type="project" value="TreeGrafter"/>
</dbReference>
<dbReference type="GO" id="GO:0006742">
    <property type="term" value="P:NADP catabolic process"/>
    <property type="evidence" value="ECO:0007669"/>
    <property type="project" value="TreeGrafter"/>
</dbReference>
<dbReference type="CDD" id="cd03429">
    <property type="entry name" value="NUDIX_NADH_pyrophosphatase_Nudt13"/>
    <property type="match status" value="1"/>
</dbReference>
<dbReference type="FunFam" id="3.90.79.10:FF:000004">
    <property type="entry name" value="NADH pyrophosphatase"/>
    <property type="match status" value="1"/>
</dbReference>
<dbReference type="Gene3D" id="3.90.79.20">
    <property type="match status" value="1"/>
</dbReference>
<dbReference type="Gene3D" id="3.90.79.10">
    <property type="entry name" value="Nucleoside Triphosphate Pyrophosphohydrolase"/>
    <property type="match status" value="1"/>
</dbReference>
<dbReference type="HAMAP" id="MF_00297">
    <property type="entry name" value="Nudix_NudC"/>
    <property type="match status" value="1"/>
</dbReference>
<dbReference type="InterPro" id="IPR050241">
    <property type="entry name" value="NAD-cap_RNA_hydrolase_NudC"/>
</dbReference>
<dbReference type="InterPro" id="IPR049734">
    <property type="entry name" value="NudC-like_C"/>
</dbReference>
<dbReference type="InterPro" id="IPR015797">
    <property type="entry name" value="NUDIX_hydrolase-like_dom_sf"/>
</dbReference>
<dbReference type="InterPro" id="IPR020084">
    <property type="entry name" value="NUDIX_hydrolase_CS"/>
</dbReference>
<dbReference type="InterPro" id="IPR000086">
    <property type="entry name" value="NUDIX_hydrolase_dom"/>
</dbReference>
<dbReference type="InterPro" id="IPR022925">
    <property type="entry name" value="RNA_Hydrolase_NudC"/>
</dbReference>
<dbReference type="InterPro" id="IPR015376">
    <property type="entry name" value="Znr_NADH_PPase"/>
</dbReference>
<dbReference type="NCBIfam" id="NF001299">
    <property type="entry name" value="PRK00241.1"/>
    <property type="match status" value="1"/>
</dbReference>
<dbReference type="PANTHER" id="PTHR42904:SF6">
    <property type="entry name" value="NAD-CAPPED RNA HYDROLASE NUDT12"/>
    <property type="match status" value="1"/>
</dbReference>
<dbReference type="PANTHER" id="PTHR42904">
    <property type="entry name" value="NUDIX HYDROLASE, NUDC SUBFAMILY"/>
    <property type="match status" value="1"/>
</dbReference>
<dbReference type="Pfam" id="PF00293">
    <property type="entry name" value="NUDIX"/>
    <property type="match status" value="1"/>
</dbReference>
<dbReference type="Pfam" id="PF09297">
    <property type="entry name" value="Zn_ribbon_NUD"/>
    <property type="match status" value="1"/>
</dbReference>
<dbReference type="SUPFAM" id="SSF55811">
    <property type="entry name" value="Nudix"/>
    <property type="match status" value="2"/>
</dbReference>
<dbReference type="PROSITE" id="PS51462">
    <property type="entry name" value="NUDIX"/>
    <property type="match status" value="1"/>
</dbReference>
<dbReference type="PROSITE" id="PS00893">
    <property type="entry name" value="NUDIX_BOX"/>
    <property type="match status" value="1"/>
</dbReference>
<keyword id="KW-0378">Hydrolase</keyword>
<keyword id="KW-0460">Magnesium</keyword>
<keyword id="KW-0464">Manganese</keyword>
<keyword id="KW-0479">Metal-binding</keyword>
<keyword id="KW-0520">NAD</keyword>
<keyword id="KW-1185">Reference proteome</keyword>
<keyword id="KW-0862">Zinc</keyword>
<proteinExistence type="inferred from homology"/>
<feature type="chain" id="PRO_0000056971" description="NAD-capped RNA hydrolase NudC">
    <location>
        <begin position="1"/>
        <end position="264"/>
    </location>
</feature>
<feature type="domain" description="Nudix hydrolase" evidence="1">
    <location>
        <begin position="128"/>
        <end position="252"/>
    </location>
</feature>
<feature type="short sequence motif" description="Nudix box" evidence="1">
    <location>
        <begin position="162"/>
        <end position="183"/>
    </location>
</feature>
<feature type="binding site" evidence="1">
    <location>
        <position position="70"/>
    </location>
    <ligand>
        <name>substrate</name>
    </ligand>
</feature>
<feature type="binding site" evidence="1">
    <location>
        <position position="99"/>
    </location>
    <ligand>
        <name>Zn(2+)</name>
        <dbReference type="ChEBI" id="CHEBI:29105"/>
    </ligand>
</feature>
<feature type="binding site" evidence="1">
    <location>
        <position position="102"/>
    </location>
    <ligand>
        <name>Zn(2+)</name>
        <dbReference type="ChEBI" id="CHEBI:29105"/>
    </ligand>
</feature>
<feature type="binding site" evidence="1">
    <location>
        <position position="112"/>
    </location>
    <ligand>
        <name>substrate</name>
    </ligand>
</feature>
<feature type="binding site" evidence="1">
    <location>
        <position position="117"/>
    </location>
    <ligand>
        <name>Zn(2+)</name>
        <dbReference type="ChEBI" id="CHEBI:29105"/>
    </ligand>
</feature>
<feature type="binding site" evidence="1">
    <location>
        <position position="122"/>
    </location>
    <ligand>
        <name>Zn(2+)</name>
        <dbReference type="ChEBI" id="CHEBI:29105"/>
    </ligand>
</feature>
<feature type="binding site" evidence="1">
    <location>
        <position position="127"/>
    </location>
    <ligand>
        <name>substrate</name>
    </ligand>
</feature>
<feature type="binding site" evidence="1">
    <location>
        <position position="161"/>
    </location>
    <ligand>
        <name>a divalent metal cation</name>
        <dbReference type="ChEBI" id="CHEBI:60240"/>
        <label>1</label>
    </ligand>
</feature>
<feature type="binding site" evidence="1">
    <location>
        <position position="177"/>
    </location>
    <ligand>
        <name>a divalent metal cation</name>
        <dbReference type="ChEBI" id="CHEBI:60240"/>
        <label>2</label>
    </ligand>
</feature>
<feature type="binding site" evidence="1">
    <location>
        <position position="177"/>
    </location>
    <ligand>
        <name>a divalent metal cation</name>
        <dbReference type="ChEBI" id="CHEBI:60240"/>
        <label>3</label>
    </ligand>
</feature>
<feature type="binding site" evidence="1">
    <location>
        <position position="181"/>
    </location>
    <ligand>
        <name>a divalent metal cation</name>
        <dbReference type="ChEBI" id="CHEBI:60240"/>
        <label>1</label>
    </ligand>
</feature>
<feature type="binding site" evidence="1">
    <location>
        <position position="181"/>
    </location>
    <ligand>
        <name>a divalent metal cation</name>
        <dbReference type="ChEBI" id="CHEBI:60240"/>
        <label>3</label>
    </ligand>
</feature>
<feature type="binding site" evidence="1">
    <location>
        <begin position="195"/>
        <end position="202"/>
    </location>
    <ligand>
        <name>substrate</name>
    </ligand>
</feature>
<feature type="binding site" evidence="1">
    <location>
        <position position="222"/>
    </location>
    <ligand>
        <name>a divalent metal cation</name>
        <dbReference type="ChEBI" id="CHEBI:60240"/>
        <label>1</label>
    </ligand>
</feature>
<feature type="binding site" evidence="1">
    <location>
        <position position="222"/>
    </location>
    <ligand>
        <name>a divalent metal cation</name>
        <dbReference type="ChEBI" id="CHEBI:60240"/>
        <label>3</label>
    </ligand>
</feature>
<feature type="binding site" evidence="1">
    <location>
        <position position="245"/>
    </location>
    <ligand>
        <name>substrate</name>
    </ligand>
</feature>
<protein>
    <recommendedName>
        <fullName evidence="1">NAD-capped RNA hydrolase NudC</fullName>
        <shortName evidence="1">DeNADding enzyme NudC</shortName>
        <ecNumber evidence="1">3.6.1.-</ecNumber>
    </recommendedName>
    <alternativeName>
        <fullName evidence="1">NADH pyrophosphatase</fullName>
        <ecNumber evidence="1">3.6.1.22</ecNumber>
    </alternativeName>
</protein>
<sequence>MNAIQPDDAGYWLLTQDSALYLINGELPQGKAADFQLQGYNGMIIGELNGRPLWLVEEIADDQRTYFSLRSLLALPEAHFNLLNRGVELNHFFKTHRFCGKCGHPTDLVQQEWAIQCQNPSCSHRTYPVICPCIIVAVRRGAQILLANHQRHKGGIYTTLAGFVEVGETFEQAVHREVLEETGIQIQNLRYFGSQPWAFPNSAMIGFLADYAGGEICVQEMEIHDAQWFDYNAPLPELPPKGTIALKLIEHTLQLCAEEERKAT</sequence>
<comment type="function">
    <text evidence="1">mRNA decapping enzyme that specifically removes the nicotinamide adenine dinucleotide (NAD) cap from a subset of mRNAs by hydrolyzing the diphosphate linkage to produce nicotinamide mononucleotide (NMN) and 5' monophosphate mRNA. The NAD-cap is present at the 5'-end of some mRNAs and stabilizes RNA against 5'-processing. Has preference for mRNAs with a 5'-end purine. Catalyzes the hydrolysis of a broad range of dinucleotide pyrophosphates.</text>
</comment>
<comment type="catalytic activity">
    <reaction evidence="1">
        <text>a 5'-end NAD(+)-phospho-ribonucleoside in mRNA + H2O = a 5'-end phospho-adenosine-phospho-ribonucleoside in mRNA + beta-nicotinamide D-ribonucleotide + 2 H(+)</text>
        <dbReference type="Rhea" id="RHEA:60876"/>
        <dbReference type="Rhea" id="RHEA-COMP:15698"/>
        <dbReference type="Rhea" id="RHEA-COMP:15719"/>
        <dbReference type="ChEBI" id="CHEBI:14649"/>
        <dbReference type="ChEBI" id="CHEBI:15377"/>
        <dbReference type="ChEBI" id="CHEBI:15378"/>
        <dbReference type="ChEBI" id="CHEBI:144029"/>
        <dbReference type="ChEBI" id="CHEBI:144051"/>
    </reaction>
    <physiologicalReaction direction="left-to-right" evidence="1">
        <dbReference type="Rhea" id="RHEA:60877"/>
    </physiologicalReaction>
</comment>
<comment type="catalytic activity">
    <reaction evidence="1">
        <text>NAD(+) + H2O = beta-nicotinamide D-ribonucleotide + AMP + 2 H(+)</text>
        <dbReference type="Rhea" id="RHEA:11800"/>
        <dbReference type="ChEBI" id="CHEBI:14649"/>
        <dbReference type="ChEBI" id="CHEBI:15377"/>
        <dbReference type="ChEBI" id="CHEBI:15378"/>
        <dbReference type="ChEBI" id="CHEBI:57540"/>
        <dbReference type="ChEBI" id="CHEBI:456215"/>
        <dbReference type="EC" id="3.6.1.22"/>
    </reaction>
</comment>
<comment type="catalytic activity">
    <reaction evidence="1">
        <text>NADH + H2O = reduced beta-nicotinamide D-ribonucleotide + AMP + 2 H(+)</text>
        <dbReference type="Rhea" id="RHEA:48868"/>
        <dbReference type="ChEBI" id="CHEBI:15377"/>
        <dbReference type="ChEBI" id="CHEBI:15378"/>
        <dbReference type="ChEBI" id="CHEBI:57945"/>
        <dbReference type="ChEBI" id="CHEBI:90832"/>
        <dbReference type="ChEBI" id="CHEBI:456215"/>
        <dbReference type="EC" id="3.6.1.22"/>
    </reaction>
</comment>
<comment type="cofactor">
    <cofactor evidence="1">
        <name>Mg(2+)</name>
        <dbReference type="ChEBI" id="CHEBI:18420"/>
    </cofactor>
    <cofactor evidence="1">
        <name>Mn(2+)</name>
        <dbReference type="ChEBI" id="CHEBI:29035"/>
    </cofactor>
    <text evidence="1">Divalent metal cations. Mg(2+) or Mn(2+).</text>
</comment>
<comment type="cofactor">
    <cofactor evidence="1">
        <name>Zn(2+)</name>
        <dbReference type="ChEBI" id="CHEBI:29105"/>
    </cofactor>
    <text evidence="1">Binds 1 zinc ion per subunit.</text>
</comment>
<comment type="subunit">
    <text evidence="1">Homodimer.</text>
</comment>
<comment type="similarity">
    <text evidence="1 2">Belongs to the Nudix hydrolase family. NudC subfamily.</text>
</comment>
<gene>
    <name evidence="1" type="primary">nudC</name>
    <name type="ordered locus">PM1735</name>
</gene>
<organism>
    <name type="scientific">Pasteurella multocida (strain Pm70)</name>
    <dbReference type="NCBI Taxonomy" id="272843"/>
    <lineage>
        <taxon>Bacteria</taxon>
        <taxon>Pseudomonadati</taxon>
        <taxon>Pseudomonadota</taxon>
        <taxon>Gammaproteobacteria</taxon>
        <taxon>Pasteurellales</taxon>
        <taxon>Pasteurellaceae</taxon>
        <taxon>Pasteurella</taxon>
    </lineage>
</organism>
<accession>P57965</accession>
<name>NUDC_PASMU</name>